<protein>
    <recommendedName>
        <fullName evidence="1">3-demethoxyubiquinol 3-hydroxylase</fullName>
        <shortName evidence="1">DMQ hydroxylase</shortName>
        <ecNumber evidence="1">1.14.99.60</ecNumber>
    </recommendedName>
    <alternativeName>
        <fullName evidence="1">2-nonaprenyl-3-methyl-6-methoxy-1,4-benzoquinol hydroxylase</fullName>
    </alternativeName>
</protein>
<proteinExistence type="inferred from homology"/>
<reference key="1">
    <citation type="journal article" date="2006" name="Appl. Environ. Microbiol.">
        <title>Complete genome sequence of the marine, chemolithoautotrophic, ammonia-oxidizing bacterium Nitrosococcus oceani ATCC 19707.</title>
        <authorList>
            <person name="Klotz M.G."/>
            <person name="Arp D.J."/>
            <person name="Chain P.S.G."/>
            <person name="El-Sheikh A.F."/>
            <person name="Hauser L.J."/>
            <person name="Hommes N.G."/>
            <person name="Larimer F.W."/>
            <person name="Malfatti S.A."/>
            <person name="Norton J.M."/>
            <person name="Poret-Peterson A.T."/>
            <person name="Vergez L.M."/>
            <person name="Ward B.B."/>
        </authorList>
    </citation>
    <scope>NUCLEOTIDE SEQUENCE [LARGE SCALE GENOMIC DNA]</scope>
    <source>
        <strain>ATCC 19707 / BCRC 17464 / JCM 30415 / NCIMB 11848 / C-107</strain>
    </source>
</reference>
<feature type="chain" id="PRO_0000338700" description="3-demethoxyubiquinol 3-hydroxylase">
    <location>
        <begin position="1"/>
        <end position="214"/>
    </location>
</feature>
<feature type="binding site" evidence="1">
    <location>
        <position position="63"/>
    </location>
    <ligand>
        <name>Fe cation</name>
        <dbReference type="ChEBI" id="CHEBI:24875"/>
        <label>1</label>
    </ligand>
</feature>
<feature type="binding site" evidence="1">
    <location>
        <position position="93"/>
    </location>
    <ligand>
        <name>Fe cation</name>
        <dbReference type="ChEBI" id="CHEBI:24875"/>
        <label>1</label>
    </ligand>
</feature>
<feature type="binding site" evidence="1">
    <location>
        <position position="93"/>
    </location>
    <ligand>
        <name>Fe cation</name>
        <dbReference type="ChEBI" id="CHEBI:24875"/>
        <label>2</label>
    </ligand>
</feature>
<feature type="binding site" evidence="1">
    <location>
        <position position="96"/>
    </location>
    <ligand>
        <name>Fe cation</name>
        <dbReference type="ChEBI" id="CHEBI:24875"/>
        <label>1</label>
    </ligand>
</feature>
<feature type="binding site" evidence="1">
    <location>
        <position position="145"/>
    </location>
    <ligand>
        <name>Fe cation</name>
        <dbReference type="ChEBI" id="CHEBI:24875"/>
        <label>2</label>
    </ligand>
</feature>
<feature type="binding site" evidence="1">
    <location>
        <position position="177"/>
    </location>
    <ligand>
        <name>Fe cation</name>
        <dbReference type="ChEBI" id="CHEBI:24875"/>
        <label>1</label>
    </ligand>
</feature>
<feature type="binding site" evidence="1">
    <location>
        <position position="177"/>
    </location>
    <ligand>
        <name>Fe cation</name>
        <dbReference type="ChEBI" id="CHEBI:24875"/>
        <label>2</label>
    </ligand>
</feature>
<feature type="binding site" evidence="1">
    <location>
        <position position="180"/>
    </location>
    <ligand>
        <name>Fe cation</name>
        <dbReference type="ChEBI" id="CHEBI:24875"/>
        <label>2</label>
    </ligand>
</feature>
<gene>
    <name evidence="1" type="primary">coq7</name>
    <name type="ordered locus">Noc_0938</name>
</gene>
<comment type="function">
    <text evidence="1">Catalyzes the hydroxylation of 2-nonaprenyl-3-methyl-6-methoxy-1,4-benzoquinol during ubiquinone biosynthesis.</text>
</comment>
<comment type="catalytic activity">
    <reaction evidence="1">
        <text>a 5-methoxy-2-methyl-3-(all-trans-polyprenyl)benzene-1,4-diol + AH2 + O2 = a 3-demethylubiquinol + A + H2O</text>
        <dbReference type="Rhea" id="RHEA:50908"/>
        <dbReference type="Rhea" id="RHEA-COMP:10859"/>
        <dbReference type="Rhea" id="RHEA-COMP:10914"/>
        <dbReference type="ChEBI" id="CHEBI:13193"/>
        <dbReference type="ChEBI" id="CHEBI:15377"/>
        <dbReference type="ChEBI" id="CHEBI:15379"/>
        <dbReference type="ChEBI" id="CHEBI:17499"/>
        <dbReference type="ChEBI" id="CHEBI:84167"/>
        <dbReference type="ChEBI" id="CHEBI:84422"/>
        <dbReference type="EC" id="1.14.99.60"/>
    </reaction>
</comment>
<comment type="cofactor">
    <cofactor evidence="1">
        <name>Fe cation</name>
        <dbReference type="ChEBI" id="CHEBI:24875"/>
    </cofactor>
    <text evidence="1">Binds 2 iron ions per subunit.</text>
</comment>
<comment type="pathway">
    <text evidence="1">Cofactor biosynthesis; ubiquinone biosynthesis.</text>
</comment>
<comment type="subcellular location">
    <subcellularLocation>
        <location evidence="1">Cell membrane</location>
        <topology evidence="1">Peripheral membrane protein</topology>
    </subcellularLocation>
</comment>
<comment type="similarity">
    <text evidence="1">Belongs to the COQ7 family.</text>
</comment>
<dbReference type="EC" id="1.14.99.60" evidence="1"/>
<dbReference type="EMBL" id="CP000127">
    <property type="protein sequence ID" value="ABA57450.1"/>
    <property type="molecule type" value="Genomic_DNA"/>
</dbReference>
<dbReference type="RefSeq" id="WP_011330519.1">
    <property type="nucleotide sequence ID" value="NC_007484.1"/>
</dbReference>
<dbReference type="SMR" id="Q3JCJ6"/>
<dbReference type="STRING" id="323261.Noc_0938"/>
<dbReference type="KEGG" id="noc:Noc_0938"/>
<dbReference type="eggNOG" id="COG2941">
    <property type="taxonomic scope" value="Bacteria"/>
</dbReference>
<dbReference type="HOGENOM" id="CLU_088601_0_0_6"/>
<dbReference type="InParanoid" id="Q3JCJ6"/>
<dbReference type="UniPathway" id="UPA00232"/>
<dbReference type="Proteomes" id="UP000006838">
    <property type="component" value="Chromosome"/>
</dbReference>
<dbReference type="GO" id="GO:0005886">
    <property type="term" value="C:plasma membrane"/>
    <property type="evidence" value="ECO:0007669"/>
    <property type="project" value="UniProtKB-SubCell"/>
</dbReference>
<dbReference type="GO" id="GO:0008682">
    <property type="term" value="F:3-demethoxyubiquinol 3-hydroxylase activity"/>
    <property type="evidence" value="ECO:0007669"/>
    <property type="project" value="UniProtKB-EC"/>
</dbReference>
<dbReference type="GO" id="GO:0046872">
    <property type="term" value="F:metal ion binding"/>
    <property type="evidence" value="ECO:0007669"/>
    <property type="project" value="UniProtKB-KW"/>
</dbReference>
<dbReference type="GO" id="GO:0006744">
    <property type="term" value="P:ubiquinone biosynthetic process"/>
    <property type="evidence" value="ECO:0007669"/>
    <property type="project" value="UniProtKB-UniRule"/>
</dbReference>
<dbReference type="CDD" id="cd01042">
    <property type="entry name" value="DMQH"/>
    <property type="match status" value="1"/>
</dbReference>
<dbReference type="Gene3D" id="1.20.1260.10">
    <property type="match status" value="1"/>
</dbReference>
<dbReference type="HAMAP" id="MF_01658">
    <property type="entry name" value="COQ7"/>
    <property type="match status" value="1"/>
</dbReference>
<dbReference type="InterPro" id="IPR047809">
    <property type="entry name" value="COQ7_proteobact"/>
</dbReference>
<dbReference type="InterPro" id="IPR012347">
    <property type="entry name" value="Ferritin-like"/>
</dbReference>
<dbReference type="InterPro" id="IPR009078">
    <property type="entry name" value="Ferritin-like_SF"/>
</dbReference>
<dbReference type="InterPro" id="IPR011566">
    <property type="entry name" value="Ubq_synth_Coq7"/>
</dbReference>
<dbReference type="NCBIfam" id="NF033656">
    <property type="entry name" value="DMQ_monoox_COQ7"/>
    <property type="match status" value="1"/>
</dbReference>
<dbReference type="PANTHER" id="PTHR11237:SF4">
    <property type="entry name" value="5-DEMETHOXYUBIQUINONE HYDROXYLASE, MITOCHONDRIAL"/>
    <property type="match status" value="1"/>
</dbReference>
<dbReference type="PANTHER" id="PTHR11237">
    <property type="entry name" value="COENZYME Q10 BIOSYNTHESIS PROTEIN 7"/>
    <property type="match status" value="1"/>
</dbReference>
<dbReference type="Pfam" id="PF03232">
    <property type="entry name" value="COQ7"/>
    <property type="match status" value="1"/>
</dbReference>
<dbReference type="SUPFAM" id="SSF47240">
    <property type="entry name" value="Ferritin-like"/>
    <property type="match status" value="1"/>
</dbReference>
<evidence type="ECO:0000255" key="1">
    <source>
        <dbReference type="HAMAP-Rule" id="MF_01658"/>
    </source>
</evidence>
<organism>
    <name type="scientific">Nitrosococcus oceani (strain ATCC 19707 / BCRC 17464 / JCM 30415 / NCIMB 11848 / C-107)</name>
    <dbReference type="NCBI Taxonomy" id="323261"/>
    <lineage>
        <taxon>Bacteria</taxon>
        <taxon>Pseudomonadati</taxon>
        <taxon>Pseudomonadota</taxon>
        <taxon>Gammaproteobacteria</taxon>
        <taxon>Chromatiales</taxon>
        <taxon>Chromatiaceae</taxon>
        <taxon>Nitrosococcus</taxon>
    </lineage>
</organism>
<keyword id="KW-1003">Cell membrane</keyword>
<keyword id="KW-0408">Iron</keyword>
<keyword id="KW-0472">Membrane</keyword>
<keyword id="KW-0479">Metal-binding</keyword>
<keyword id="KW-0503">Monooxygenase</keyword>
<keyword id="KW-0560">Oxidoreductase</keyword>
<keyword id="KW-1185">Reference proteome</keyword>
<keyword id="KW-0831">Ubiquinone biosynthesis</keyword>
<name>COQ7_NITOC</name>
<accession>Q3JCJ6</accession>
<sequence>MEGRRLSQLDRVIINFDDALRTVFGQPRTTERASPASGIAEGALSEKERRLSGCLMRVNHAGEVAAQALYQGQALTARLTEIRKAMENAAREENEHLVWCQQRVQELGAHTSYLGPFWYGGSFVIGALAGMAGDKWSLGFVAETEHQVVKHIERHLDRISAQDAPSRAILEQMKEDEARHATVALEAGGVELPSSIKALMGAASKVMTRTAYWI</sequence>